<feature type="chain" id="PRO_1000086778" description="Large ribosomal subunit protein uL16">
    <location>
        <begin position="1"/>
        <end position="136"/>
    </location>
</feature>
<organism>
    <name type="scientific">Shewanella pealeana (strain ATCC 700345 / ANG-SQ1)</name>
    <dbReference type="NCBI Taxonomy" id="398579"/>
    <lineage>
        <taxon>Bacteria</taxon>
        <taxon>Pseudomonadati</taxon>
        <taxon>Pseudomonadota</taxon>
        <taxon>Gammaproteobacteria</taxon>
        <taxon>Alteromonadales</taxon>
        <taxon>Shewanellaceae</taxon>
        <taxon>Shewanella</taxon>
    </lineage>
</organism>
<keyword id="KW-1185">Reference proteome</keyword>
<keyword id="KW-0687">Ribonucleoprotein</keyword>
<keyword id="KW-0689">Ribosomal protein</keyword>
<keyword id="KW-0694">RNA-binding</keyword>
<keyword id="KW-0699">rRNA-binding</keyword>
<keyword id="KW-0820">tRNA-binding</keyword>
<accession>A8GYY3</accession>
<protein>
    <recommendedName>
        <fullName evidence="1">Large ribosomal subunit protein uL16</fullName>
    </recommendedName>
    <alternativeName>
        <fullName evidence="2">50S ribosomal protein L16</fullName>
    </alternativeName>
</protein>
<proteinExistence type="inferred from homology"/>
<evidence type="ECO:0000255" key="1">
    <source>
        <dbReference type="HAMAP-Rule" id="MF_01342"/>
    </source>
</evidence>
<evidence type="ECO:0000305" key="2"/>
<name>RL16_SHEPA</name>
<gene>
    <name evidence="1" type="primary">rplP</name>
    <name type="ordered locus">Spea_0191</name>
</gene>
<sequence>MLQPKRMKFRKMFKGRNRGLANGTEVSFGEFGLKAVGRGRLTARQIEAARRAMTRHIKRQGQIWIRVFPDKPITSKPLEVRMGKGKGNVEYWVCQIQPGKVLYEMNGVSEELAREAFTLAAAKLPLKTTFVTKSVM</sequence>
<reference key="1">
    <citation type="submission" date="2007-10" db="EMBL/GenBank/DDBJ databases">
        <title>Complete sequence of Shewanella pealeana ATCC 700345.</title>
        <authorList>
            <consortium name="US DOE Joint Genome Institute"/>
            <person name="Copeland A."/>
            <person name="Lucas S."/>
            <person name="Lapidus A."/>
            <person name="Barry K."/>
            <person name="Glavina del Rio T."/>
            <person name="Dalin E."/>
            <person name="Tice H."/>
            <person name="Pitluck S."/>
            <person name="Chertkov O."/>
            <person name="Brettin T."/>
            <person name="Bruce D."/>
            <person name="Detter J.C."/>
            <person name="Han C."/>
            <person name="Schmutz J."/>
            <person name="Larimer F."/>
            <person name="Land M."/>
            <person name="Hauser L."/>
            <person name="Kyrpides N."/>
            <person name="Kim E."/>
            <person name="Zhao J.-S.Z."/>
            <person name="Manno D."/>
            <person name="Hawari J."/>
            <person name="Richardson P."/>
        </authorList>
    </citation>
    <scope>NUCLEOTIDE SEQUENCE [LARGE SCALE GENOMIC DNA]</scope>
    <source>
        <strain>ATCC 700345 / ANG-SQ1</strain>
    </source>
</reference>
<comment type="function">
    <text evidence="1">Binds 23S rRNA and is also seen to make contacts with the A and possibly P site tRNAs.</text>
</comment>
<comment type="subunit">
    <text evidence="1">Part of the 50S ribosomal subunit.</text>
</comment>
<comment type="similarity">
    <text evidence="1">Belongs to the universal ribosomal protein uL16 family.</text>
</comment>
<dbReference type="EMBL" id="CP000851">
    <property type="protein sequence ID" value="ABV85520.1"/>
    <property type="molecule type" value="Genomic_DNA"/>
</dbReference>
<dbReference type="RefSeq" id="WP_012153462.1">
    <property type="nucleotide sequence ID" value="NC_009901.1"/>
</dbReference>
<dbReference type="SMR" id="A8GYY3"/>
<dbReference type="STRING" id="398579.Spea_0191"/>
<dbReference type="KEGG" id="spl:Spea_0191"/>
<dbReference type="eggNOG" id="COG0197">
    <property type="taxonomic scope" value="Bacteria"/>
</dbReference>
<dbReference type="HOGENOM" id="CLU_078858_2_1_6"/>
<dbReference type="OrthoDB" id="9802589at2"/>
<dbReference type="Proteomes" id="UP000002608">
    <property type="component" value="Chromosome"/>
</dbReference>
<dbReference type="GO" id="GO:0022625">
    <property type="term" value="C:cytosolic large ribosomal subunit"/>
    <property type="evidence" value="ECO:0007669"/>
    <property type="project" value="TreeGrafter"/>
</dbReference>
<dbReference type="GO" id="GO:0019843">
    <property type="term" value="F:rRNA binding"/>
    <property type="evidence" value="ECO:0007669"/>
    <property type="project" value="UniProtKB-UniRule"/>
</dbReference>
<dbReference type="GO" id="GO:0003735">
    <property type="term" value="F:structural constituent of ribosome"/>
    <property type="evidence" value="ECO:0007669"/>
    <property type="project" value="InterPro"/>
</dbReference>
<dbReference type="GO" id="GO:0000049">
    <property type="term" value="F:tRNA binding"/>
    <property type="evidence" value="ECO:0007669"/>
    <property type="project" value="UniProtKB-KW"/>
</dbReference>
<dbReference type="GO" id="GO:0006412">
    <property type="term" value="P:translation"/>
    <property type="evidence" value="ECO:0007669"/>
    <property type="project" value="UniProtKB-UniRule"/>
</dbReference>
<dbReference type="CDD" id="cd01433">
    <property type="entry name" value="Ribosomal_L16_L10e"/>
    <property type="match status" value="1"/>
</dbReference>
<dbReference type="FunFam" id="3.90.1170.10:FF:000001">
    <property type="entry name" value="50S ribosomal protein L16"/>
    <property type="match status" value="1"/>
</dbReference>
<dbReference type="Gene3D" id="3.90.1170.10">
    <property type="entry name" value="Ribosomal protein L10e/L16"/>
    <property type="match status" value="1"/>
</dbReference>
<dbReference type="HAMAP" id="MF_01342">
    <property type="entry name" value="Ribosomal_uL16"/>
    <property type="match status" value="1"/>
</dbReference>
<dbReference type="InterPro" id="IPR047873">
    <property type="entry name" value="Ribosomal_uL16"/>
</dbReference>
<dbReference type="InterPro" id="IPR000114">
    <property type="entry name" value="Ribosomal_uL16_bact-type"/>
</dbReference>
<dbReference type="InterPro" id="IPR020798">
    <property type="entry name" value="Ribosomal_uL16_CS"/>
</dbReference>
<dbReference type="InterPro" id="IPR016180">
    <property type="entry name" value="Ribosomal_uL16_dom"/>
</dbReference>
<dbReference type="InterPro" id="IPR036920">
    <property type="entry name" value="Ribosomal_uL16_sf"/>
</dbReference>
<dbReference type="NCBIfam" id="TIGR01164">
    <property type="entry name" value="rplP_bact"/>
    <property type="match status" value="1"/>
</dbReference>
<dbReference type="PANTHER" id="PTHR12220">
    <property type="entry name" value="50S/60S RIBOSOMAL PROTEIN L16"/>
    <property type="match status" value="1"/>
</dbReference>
<dbReference type="PANTHER" id="PTHR12220:SF13">
    <property type="entry name" value="LARGE RIBOSOMAL SUBUNIT PROTEIN UL16M"/>
    <property type="match status" value="1"/>
</dbReference>
<dbReference type="Pfam" id="PF00252">
    <property type="entry name" value="Ribosomal_L16"/>
    <property type="match status" value="1"/>
</dbReference>
<dbReference type="PRINTS" id="PR00060">
    <property type="entry name" value="RIBOSOMALL16"/>
</dbReference>
<dbReference type="SUPFAM" id="SSF54686">
    <property type="entry name" value="Ribosomal protein L16p/L10e"/>
    <property type="match status" value="1"/>
</dbReference>
<dbReference type="PROSITE" id="PS00586">
    <property type="entry name" value="RIBOSOMAL_L16_1"/>
    <property type="match status" value="1"/>
</dbReference>
<dbReference type="PROSITE" id="PS00701">
    <property type="entry name" value="RIBOSOMAL_L16_2"/>
    <property type="match status" value="1"/>
</dbReference>